<proteinExistence type="evidence at protein level"/>
<reference key="1">
    <citation type="journal article" date="1998" name="Cell">
        <title>A tripartite protein complex with the potential to couple synaptic vesicle exocytosis to cell adhesion in brain.</title>
        <authorList>
            <person name="Butz S."/>
            <person name="Okamoto M."/>
            <person name="Suedhof T.C."/>
        </authorList>
    </citation>
    <scope>NUCLEOTIDE SEQUENCE [MRNA]</scope>
    <scope>INTERACTION WITH DLG2 AND DLG3</scope>
</reference>
<reference key="2">
    <citation type="journal article" date="1999" name="J. Neurosci.">
        <title>Characterization of MALS/Velis-1, -2, and -3: a family of mammalian LIN-7 homologs enriched at brain synapses in association with the postsynaptic density-95/NMDA receptor postsynaptic complex.</title>
        <authorList>
            <person name="Jo K."/>
            <person name="Derin R."/>
            <person name="Li M."/>
            <person name="Bredt D.S."/>
        </authorList>
    </citation>
    <scope>NUCLEOTIDE SEQUENCE [MRNA]</scope>
</reference>
<reference key="3">
    <citation type="journal article" date="2004" name="Genome Res.">
        <title>The status, quality, and expansion of the NIH full-length cDNA project: the Mammalian Gene Collection (MGC).</title>
        <authorList>
            <consortium name="The MGC Project Team"/>
        </authorList>
    </citation>
    <scope>NUCLEOTIDE SEQUENCE [LARGE SCALE MRNA]</scope>
    <source>
        <strain>FVB/N</strain>
        <tissue>Salivary gland</tissue>
    </source>
</reference>
<reference key="4">
    <citation type="journal article" date="2000" name="Science">
        <title>Kinesin superfamily motor protein KIF17 and mLin-10 in NMDA receptor-containing vesicle transport.</title>
        <authorList>
            <person name="Setou M."/>
            <person name="Nakagawa T."/>
            <person name="Seog D.-H."/>
            <person name="Hirokawa N."/>
        </authorList>
    </citation>
    <scope>FUNCTION</scope>
    <scope>IDENTIFICATION IN COMPLEX WITH APBA1 AND CASK</scope>
</reference>
<reference key="5">
    <citation type="journal article" date="2002" name="Am. J. Physiol.">
        <title>Basolateral membrane expression of the Kir 2.3 channel is coordinated by PDZ interaction with Lin-7/CASK complex.</title>
        <authorList>
            <person name="Olsen O."/>
            <person name="Liu H."/>
            <person name="Wade J.B."/>
            <person name="Merot J."/>
            <person name="Welling P.A."/>
        </authorList>
    </citation>
    <scope>TISSUE SPECIFICITY</scope>
</reference>
<reference key="6">
    <citation type="journal article" date="2004" name="J. Biol. Chem.">
        <title>PSD-95 and Lin-7b interact with acid-sensing ion channel-3 and have opposite effects on H+- gated current.</title>
        <authorList>
            <person name="Hruska-Hageman A.M."/>
            <person name="Benson C.J."/>
            <person name="Leonard A.S."/>
            <person name="Price M.P."/>
            <person name="Welsh M.J."/>
        </authorList>
    </citation>
    <scope>INTERACTION WITH ASIC3</scope>
    <scope>FUNCTION</scope>
</reference>
<reference key="7">
    <citation type="journal article" date="2005" name="Am. J. Physiol.">
        <title>Differential localization of the Mammalian Lin 7 (MALS/Veli) PDZ proteins in the kidney.</title>
        <authorList>
            <person name="Olsen O."/>
            <person name="Wade J.B."/>
            <person name="Morin N."/>
            <person name="Bredt D.S."/>
            <person name="Welling P.A."/>
        </authorList>
    </citation>
    <scope>SUBCELLULAR LOCATION</scope>
    <scope>TISSUE SPECIFICITY</scope>
</reference>
<reference key="8">
    <citation type="journal article" date="2010" name="Cell">
        <title>A tissue-specific atlas of mouse protein phosphorylation and expression.</title>
        <authorList>
            <person name="Huttlin E.L."/>
            <person name="Jedrychowski M.P."/>
            <person name="Elias J.E."/>
            <person name="Goswami T."/>
            <person name="Rad R."/>
            <person name="Beausoleil S.A."/>
            <person name="Villen J."/>
            <person name="Haas W."/>
            <person name="Sowa M.E."/>
            <person name="Gygi S.P."/>
        </authorList>
    </citation>
    <scope>IDENTIFICATION BY MASS SPECTROMETRY [LARGE SCALE ANALYSIS]</scope>
    <source>
        <tissue>Brain</tissue>
    </source>
</reference>
<reference key="9">
    <citation type="journal article" date="2005" name="Proc. Natl. Acad. Sci. U.S.A.">
        <title>A unified assembly mode revealed by the structures of tetrameric L27 domain complexes formed by mLin-2/mLin-7 and Patj/Pals1 scaffold proteins.</title>
        <authorList>
            <person name="Feng W."/>
            <person name="Long J.-F."/>
            <person name="Zhang M."/>
        </authorList>
    </citation>
    <scope>STRUCTURE BY NMR OF 8-64</scope>
    <scope>INTERACTION WITH CASK</scope>
</reference>
<reference key="10">
    <citation type="journal article" date="2012" name="J. Biol. Chem.">
        <title>Structure of an L27 domain heterotrimer from cell polarity complex Patj/Pals1/Mals2 reveals mutually independent L27 domain assembly mode.</title>
        <authorList>
            <person name="Zhang J."/>
            <person name="Yang X."/>
            <person name="Wang Z."/>
            <person name="Zhou H."/>
            <person name="Xie X."/>
            <person name="Shen Y."/>
            <person name="Long J."/>
        </authorList>
    </citation>
    <scope>X-RAY CRYSTALLOGRAPHY (2.05 ANGSTROMS) OF 3-66 IN COMPLEX WITH HUMAN PALS1 AND RAT PATJ</scope>
    <scope>IDENTIFICATION IN A COMPLEX WITH DLG1 AND CASK</scope>
</reference>
<dbReference type="EMBL" id="AF087694">
    <property type="protein sequence ID" value="AAC78482.1"/>
    <property type="molecule type" value="mRNA"/>
</dbReference>
<dbReference type="EMBL" id="AF173082">
    <property type="protein sequence ID" value="AAD48501.1"/>
    <property type="molecule type" value="mRNA"/>
</dbReference>
<dbReference type="EMBL" id="BC031780">
    <property type="protein sequence ID" value="AAH31780.1"/>
    <property type="molecule type" value="mRNA"/>
</dbReference>
<dbReference type="CCDS" id="CCDS21239.1"/>
<dbReference type="RefSeq" id="NP_035828.1">
    <property type="nucleotide sequence ID" value="NM_011698.2"/>
</dbReference>
<dbReference type="PDB" id="1Y74">
    <property type="method" value="NMR"/>
    <property type="chains" value="A/C=8-64"/>
</dbReference>
<dbReference type="PDB" id="3UIT">
    <property type="method" value="X-ray"/>
    <property type="resolution" value="2.05 A"/>
    <property type="chains" value="A/B/C/D=3-66"/>
</dbReference>
<dbReference type="PDBsum" id="1Y74"/>
<dbReference type="PDBsum" id="3UIT"/>
<dbReference type="SMR" id="O88951"/>
<dbReference type="BioGRID" id="204515">
    <property type="interactions" value="7"/>
</dbReference>
<dbReference type="ComplexPortal" id="CPX-884">
    <property type="entry name" value="LIN-10-LIN-2-LIN-7 complex, LIN7B variant"/>
</dbReference>
<dbReference type="CORUM" id="O88951"/>
<dbReference type="FunCoup" id="O88951">
    <property type="interactions" value="574"/>
</dbReference>
<dbReference type="IntAct" id="O88951">
    <property type="interactions" value="2"/>
</dbReference>
<dbReference type="STRING" id="10090.ENSMUSP00000003971"/>
<dbReference type="iPTMnet" id="O88951"/>
<dbReference type="PhosphoSitePlus" id="O88951"/>
<dbReference type="jPOST" id="O88951"/>
<dbReference type="PaxDb" id="10090-ENSMUSP00000003971"/>
<dbReference type="PeptideAtlas" id="O88951"/>
<dbReference type="ProteomicsDB" id="265072"/>
<dbReference type="Antibodypedia" id="31908">
    <property type="antibodies" value="267 antibodies from 26 providers"/>
</dbReference>
<dbReference type="DNASU" id="22342"/>
<dbReference type="Ensembl" id="ENSMUST00000003971.10">
    <property type="protein sequence ID" value="ENSMUSP00000003971.8"/>
    <property type="gene ID" value="ENSMUSG00000003872.10"/>
</dbReference>
<dbReference type="GeneID" id="22342"/>
<dbReference type="KEGG" id="mmu:22342"/>
<dbReference type="UCSC" id="uc009guv.1">
    <property type="organism name" value="mouse"/>
</dbReference>
<dbReference type="AGR" id="MGI:1330858"/>
<dbReference type="CTD" id="64130"/>
<dbReference type="MGI" id="MGI:1330858">
    <property type="gene designation" value="Lin7b"/>
</dbReference>
<dbReference type="VEuPathDB" id="HostDB:ENSMUSG00000003872"/>
<dbReference type="eggNOG" id="KOG3550">
    <property type="taxonomic scope" value="Eukaryota"/>
</dbReference>
<dbReference type="GeneTree" id="ENSGT00940000153222"/>
<dbReference type="HOGENOM" id="CLU_097962_0_0_1"/>
<dbReference type="InParanoid" id="O88951"/>
<dbReference type="OMA" id="TDMATMT"/>
<dbReference type="OrthoDB" id="10056216at2759"/>
<dbReference type="PhylomeDB" id="O88951"/>
<dbReference type="TreeFam" id="TF316850"/>
<dbReference type="Reactome" id="R-MMU-212676">
    <property type="pathway name" value="Dopamine Neurotransmitter Release Cycle"/>
</dbReference>
<dbReference type="Reactome" id="R-MMU-5666185">
    <property type="pathway name" value="RHO GTPases Activate Rhotekin and Rhophilins"/>
</dbReference>
<dbReference type="BioGRID-ORCS" id="22342">
    <property type="hits" value="4 hits in 76 CRISPR screens"/>
</dbReference>
<dbReference type="CD-CODE" id="CE726F99">
    <property type="entry name" value="Postsynaptic density"/>
</dbReference>
<dbReference type="EvolutionaryTrace" id="O88951"/>
<dbReference type="PRO" id="PR:O88951"/>
<dbReference type="Proteomes" id="UP000000589">
    <property type="component" value="Chromosome 7"/>
</dbReference>
<dbReference type="RNAct" id="O88951">
    <property type="molecule type" value="protein"/>
</dbReference>
<dbReference type="Bgee" id="ENSMUSG00000003872">
    <property type="expression patterns" value="Expressed in facial nucleus and 145 other cell types or tissues"/>
</dbReference>
<dbReference type="ExpressionAtlas" id="O88951">
    <property type="expression patterns" value="baseline and differential"/>
</dbReference>
<dbReference type="GO" id="GO:0016323">
    <property type="term" value="C:basolateral plasma membrane"/>
    <property type="evidence" value="ECO:0007669"/>
    <property type="project" value="UniProtKB-SubCell"/>
</dbReference>
<dbReference type="GO" id="GO:0005923">
    <property type="term" value="C:bicellular tight junction"/>
    <property type="evidence" value="ECO:0007669"/>
    <property type="project" value="UniProtKB-SubCell"/>
</dbReference>
<dbReference type="GO" id="GO:0005886">
    <property type="term" value="C:plasma membrane"/>
    <property type="evidence" value="ECO:0000314"/>
    <property type="project" value="MGI"/>
</dbReference>
<dbReference type="GO" id="GO:0098839">
    <property type="term" value="C:postsynaptic density membrane"/>
    <property type="evidence" value="ECO:0007669"/>
    <property type="project" value="UniProtKB-SubCell"/>
</dbReference>
<dbReference type="GO" id="GO:0098793">
    <property type="term" value="C:presynapse"/>
    <property type="evidence" value="ECO:0007669"/>
    <property type="project" value="GOC"/>
</dbReference>
<dbReference type="GO" id="GO:0030658">
    <property type="term" value="C:transport vesicle membrane"/>
    <property type="evidence" value="ECO:0000304"/>
    <property type="project" value="Reactome"/>
</dbReference>
<dbReference type="GO" id="GO:0019904">
    <property type="term" value="F:protein domain specific binding"/>
    <property type="evidence" value="ECO:0007669"/>
    <property type="project" value="Ensembl"/>
</dbReference>
<dbReference type="GO" id="GO:0006887">
    <property type="term" value="P:exocytosis"/>
    <property type="evidence" value="ECO:0007669"/>
    <property type="project" value="UniProtKB-KW"/>
</dbReference>
<dbReference type="GO" id="GO:0007269">
    <property type="term" value="P:neurotransmitter secretion"/>
    <property type="evidence" value="ECO:0000316"/>
    <property type="project" value="MGI"/>
</dbReference>
<dbReference type="GO" id="GO:0015031">
    <property type="term" value="P:protein transport"/>
    <property type="evidence" value="ECO:0007669"/>
    <property type="project" value="UniProtKB-KW"/>
</dbReference>
<dbReference type="CDD" id="cd06796">
    <property type="entry name" value="PDZ_Lin-7-like"/>
    <property type="match status" value="1"/>
</dbReference>
<dbReference type="FunFam" id="2.30.42.10:FF:000076">
    <property type="entry name" value="Protein lin-7 homolog"/>
    <property type="match status" value="1"/>
</dbReference>
<dbReference type="Gene3D" id="2.30.42.10">
    <property type="match status" value="1"/>
</dbReference>
<dbReference type="Gene3D" id="1.10.287.650">
    <property type="entry name" value="L27 domain"/>
    <property type="match status" value="1"/>
</dbReference>
<dbReference type="InterPro" id="IPR014775">
    <property type="entry name" value="L27_C"/>
</dbReference>
<dbReference type="InterPro" id="IPR004172">
    <property type="entry name" value="L27_dom"/>
</dbReference>
<dbReference type="InterPro" id="IPR036892">
    <property type="entry name" value="L27_dom_sf"/>
</dbReference>
<dbReference type="InterPro" id="IPR017365">
    <property type="entry name" value="LIN7"/>
</dbReference>
<dbReference type="InterPro" id="IPR051109">
    <property type="entry name" value="MAM_complex_regulator"/>
</dbReference>
<dbReference type="InterPro" id="IPR001478">
    <property type="entry name" value="PDZ"/>
</dbReference>
<dbReference type="InterPro" id="IPR036034">
    <property type="entry name" value="PDZ_sf"/>
</dbReference>
<dbReference type="PANTHER" id="PTHR14063">
    <property type="entry name" value="PROTEIN LIN-7 HOMOLOG"/>
    <property type="match status" value="1"/>
</dbReference>
<dbReference type="Pfam" id="PF02828">
    <property type="entry name" value="L27"/>
    <property type="match status" value="1"/>
</dbReference>
<dbReference type="Pfam" id="PF00595">
    <property type="entry name" value="PDZ"/>
    <property type="match status" value="1"/>
</dbReference>
<dbReference type="PIRSF" id="PIRSF038039">
    <property type="entry name" value="Lin-7_homologue"/>
    <property type="match status" value="1"/>
</dbReference>
<dbReference type="SMART" id="SM00569">
    <property type="entry name" value="L27"/>
    <property type="match status" value="1"/>
</dbReference>
<dbReference type="SMART" id="SM00228">
    <property type="entry name" value="PDZ"/>
    <property type="match status" value="1"/>
</dbReference>
<dbReference type="SUPFAM" id="SSF101288">
    <property type="entry name" value="L27 domain"/>
    <property type="match status" value="1"/>
</dbReference>
<dbReference type="SUPFAM" id="SSF50156">
    <property type="entry name" value="PDZ domain-like"/>
    <property type="match status" value="1"/>
</dbReference>
<dbReference type="PROSITE" id="PS51022">
    <property type="entry name" value="L27"/>
    <property type="match status" value="1"/>
</dbReference>
<dbReference type="PROSITE" id="PS50106">
    <property type="entry name" value="PDZ"/>
    <property type="match status" value="1"/>
</dbReference>
<evidence type="ECO:0000250" key="1"/>
<evidence type="ECO:0000250" key="2">
    <source>
        <dbReference type="UniProtKB" id="Q9HAP6"/>
    </source>
</evidence>
<evidence type="ECO:0000250" key="3">
    <source>
        <dbReference type="UniProtKB" id="Q9Z252"/>
    </source>
</evidence>
<evidence type="ECO:0000255" key="4">
    <source>
        <dbReference type="PROSITE-ProRule" id="PRU00143"/>
    </source>
</evidence>
<evidence type="ECO:0000255" key="5">
    <source>
        <dbReference type="PROSITE-ProRule" id="PRU00365"/>
    </source>
</evidence>
<evidence type="ECO:0000256" key="6">
    <source>
        <dbReference type="SAM" id="MobiDB-lite"/>
    </source>
</evidence>
<evidence type="ECO:0000269" key="7">
    <source>
    </source>
</evidence>
<evidence type="ECO:0000269" key="8">
    <source>
    </source>
</evidence>
<evidence type="ECO:0000269" key="9">
    <source>
    </source>
</evidence>
<evidence type="ECO:0000269" key="10">
    <source>
    </source>
</evidence>
<evidence type="ECO:0000269" key="11">
    <source>
    </source>
</evidence>
<evidence type="ECO:0000269" key="12">
    <source>
    </source>
</evidence>
<evidence type="ECO:0000269" key="13">
    <source>
    </source>
</evidence>
<evidence type="ECO:0000305" key="14"/>
<evidence type="ECO:0007829" key="15">
    <source>
        <dbReference type="PDB" id="3UIT"/>
    </source>
</evidence>
<gene>
    <name type="primary">Lin7b</name>
    <name type="synonym">Mals2</name>
    <name type="synonym">Veli2</name>
</gene>
<feature type="chain" id="PRO_0000189627" description="Protein lin-7 homolog B">
    <location>
        <begin position="1"/>
        <end position="207"/>
    </location>
</feature>
<feature type="domain" description="L27" evidence="5">
    <location>
        <begin position="10"/>
        <end position="65"/>
    </location>
</feature>
<feature type="domain" description="PDZ" evidence="4">
    <location>
        <begin position="93"/>
        <end position="175"/>
    </location>
</feature>
<feature type="region of interest" description="Disordered" evidence="6">
    <location>
        <begin position="187"/>
        <end position="207"/>
    </location>
</feature>
<feature type="short sequence motif" description="Kinase interacting site" evidence="1">
    <location>
        <begin position="1"/>
        <end position="13"/>
    </location>
</feature>
<feature type="compositionally biased region" description="Polar residues" evidence="6">
    <location>
        <begin position="198"/>
        <end position="207"/>
    </location>
</feature>
<feature type="helix" evidence="15">
    <location>
        <begin position="7"/>
        <end position="27"/>
    </location>
</feature>
<feature type="helix" evidence="15">
    <location>
        <begin position="33"/>
        <end position="43"/>
    </location>
</feature>
<feature type="helix" evidence="15">
    <location>
        <begin position="45"/>
        <end position="59"/>
    </location>
</feature>
<accession>O88951</accession>
<sequence length="207" mass="22914">MAALVEPLGLERDVSRAVELLERLQRSGELPPQKLQALQRVLQSRFCSAIREVYEQLYDTLDITGSAEVRAHATAKATVAAFTASEGHAHPRVVELPKTDEGLGFNIMGGKEQNSPIYISRVIPGGVADRHGGLKRGDQLLSVNGVSVEGEHHEKAVELLKAAQGSVKLVVRYTPRVLEEMEARFEKMRSARRRQQHHSYTSLESRG</sequence>
<comment type="function">
    <text evidence="7 9">Plays a role in establishing and maintaining the asymmetric distribution of channels and receptors at the plasma membrane of polarized cells. Forms membrane-associated multiprotein complexes that may regulate delivery and recycling of proteins to the correct membrane domains. The tripartite complex composed of LIN7 (LIN7A, LIN7B or LIN7C), CASK and APBA1 associates with the motor protein KIF17 to transport vesicles containing N-methyl-D-aspartate (NMDA) receptor subunit NR2B along microtubules (PubMed:10846156). This complex may have the potential to couple synaptic vesicle exocytosis to cell adhesion in brain. Ensures the proper localization of GRIN2B (subunit 2B of the NMDA receptor) to neuronal postsynaptic density and may function in localizing synaptic vesicles at synapses where it is recruited by beta-catenin and cadherin. Required to localize Kir2 channels, GABA transporter (SLC6A12) and EGFR/ERBB1, ERBB2, ERBB3 and ERBB4 to the basolateral membrane of epithelial cells. May increase the amplitude of ASIC3 acid-evoked currents by stabilizing the channel at the cell surface.</text>
</comment>
<comment type="subunit">
    <text evidence="2 3 7 9 11 12 13">Forms a complex with CASK and CASKIN1 (By similarity). Component of the brain-specific heterotrimeric complex (LIN-10-LIN-2-LIN-7 complex) composed of at least APBA1, CASK, and LIN7, which associates with the motor protein KIF17 to transport vesicles along microtubules (PubMed:10846156). Forms a heterotrimeric complex composed of MMP5, LIN7B and PATJ; the N-terminal L27 domain of PALS1 interacts with the L27 domain of PATJ and the C-terminal L27 domain of PALS1 interacts with the L27 domain of LIN7B (PubMed:22337881). Forms a heterotrimeric complex with DLG1 and CASK via their L27 domains (PubMed:15863617, PubMed:22337881). Interacts with DLG4 and GRIN2B as well as CDH1 and CTNNB1, the channels KCNJ12/Kir2.2, KCNJ4/Kir2.3 and probably KCNJ2/Kir2.1 and SLC6A12/BGT-1 via its PDZ domain (By similarity). The association of LIN7A with cadherin and beta-catenin is calcium-dependent, occurs at synaptic junctions and requires the actin cytoskeleton. Interacts with EGFR, ERBB2, ERBB3 and ERBB4 with both PDZ and KID domains (By similarity). Associates with KIF17 via APBA1 (By similarity). Interacts with ASIC3 (PubMed:15317815). Interacts with TOPK. Interacts with RTKN (By similarity). Interacts with APBA1 (PubMed:15863617). Interacts with MPP7 (By similarity). Interacts with DLG2 (PubMed:9753324). Interacts with DLG3 (PubMed:9753324).</text>
</comment>
<comment type="subcellular location">
    <subcellularLocation>
        <location evidence="10">Cell membrane</location>
        <topology evidence="10">Peripheral membrane protein</topology>
    </subcellularLocation>
    <subcellularLocation>
        <location evidence="10">Basolateral cell membrane</location>
        <topology evidence="10">Peripheral membrane protein</topology>
    </subcellularLocation>
    <subcellularLocation>
        <location evidence="10">Cell junction</location>
    </subcellularLocation>
    <subcellularLocation>
        <location evidence="10">Postsynaptic density membrane</location>
        <topology evidence="10">Peripheral membrane protein</topology>
    </subcellularLocation>
    <subcellularLocation>
        <location evidence="10">Cell junction</location>
        <location evidence="10">Tight junction</location>
    </subcellularLocation>
    <text>Mainly basolateral in renal epithelial cells.</text>
</comment>
<comment type="tissue specificity">
    <text evidence="8 10">Expressed in the kidney; predominantly in the vasa recta.</text>
</comment>
<comment type="domain">
    <text evidence="1">The kinase interacting site is required for proper delivery of ERBB2 to the basolateral membrane.</text>
</comment>
<comment type="domain">
    <text evidence="1">The PDZ domain regulates endocytosis and recycling of the receptor at the membrane.</text>
</comment>
<comment type="domain">
    <text evidence="1">The L27 domain mediates interaction with CASK and is involved in the formation of multimeric complexes and the association of LIN7 to membranes.</text>
</comment>
<comment type="similarity">
    <text evidence="14">Belongs to the lin-7 family.</text>
</comment>
<name>LIN7B_MOUSE</name>
<protein>
    <recommendedName>
        <fullName>Protein lin-7 homolog B</fullName>
        <shortName>Lin-7B</shortName>
    </recommendedName>
    <alternativeName>
        <fullName>Mammalian lin-seven protein 2</fullName>
        <shortName>MALS-2</shortName>
    </alternativeName>
    <alternativeName>
        <fullName>Vertebrate lin-7 homolog 2</fullName>
        <shortName>Veli-2</shortName>
    </alternativeName>
</protein>
<organism>
    <name type="scientific">Mus musculus</name>
    <name type="common">Mouse</name>
    <dbReference type="NCBI Taxonomy" id="10090"/>
    <lineage>
        <taxon>Eukaryota</taxon>
        <taxon>Metazoa</taxon>
        <taxon>Chordata</taxon>
        <taxon>Craniata</taxon>
        <taxon>Vertebrata</taxon>
        <taxon>Euteleostomi</taxon>
        <taxon>Mammalia</taxon>
        <taxon>Eutheria</taxon>
        <taxon>Euarchontoglires</taxon>
        <taxon>Glires</taxon>
        <taxon>Rodentia</taxon>
        <taxon>Myomorpha</taxon>
        <taxon>Muroidea</taxon>
        <taxon>Muridae</taxon>
        <taxon>Murinae</taxon>
        <taxon>Mus</taxon>
        <taxon>Mus</taxon>
    </lineage>
</organism>
<keyword id="KW-0002">3D-structure</keyword>
<keyword id="KW-0965">Cell junction</keyword>
<keyword id="KW-1003">Cell membrane</keyword>
<keyword id="KW-0268">Exocytosis</keyword>
<keyword id="KW-0472">Membrane</keyword>
<keyword id="KW-0628">Postsynaptic cell membrane</keyword>
<keyword id="KW-0653">Protein transport</keyword>
<keyword id="KW-1185">Reference proteome</keyword>
<keyword id="KW-0770">Synapse</keyword>
<keyword id="KW-0796">Tight junction</keyword>
<keyword id="KW-0813">Transport</keyword>